<sequence length="777" mass="86940">MSAQTSLAEKGLNPGLMCQESYACSGTDEAIFECDECCSLQCLRCEEELHRQERLRNHERIRLKAGHVPYCDPCKGPNGHSPGVRQRAAVRCQTCKINLCLECQKRTHSGGNKRRHPITVYLVSKVQESLEGEEMDEETKRKKMTERVVSFLLVDENEEIQVTNEEDFIRKLDCKPDQHLKVVSIFGNTGDGKSHTLNHTFFYGREVFKTSPAQESCTVGVWAAYDPVHKVAVIDTEGLLGATVNLSQRTRLLLKVLAISDLVIYRTHADRLHNDLFKFLGDASEAYLKHFTKELKATTARCGLDVPLSTLGPAVIIFHETVHTQLLGSDHPSEAPEKLIQDRFRKLGRFPEAFSSIHYKGTRTYNPPTDFSGLRRALEQLLENNTTRSPRHPGVIFKALKALSDRFSGEIPDDQMAHSSFFPDEYFTCSSLCLSCGAGCKNSMNHGKEGVPHEAKSRCRYSHQYDNRVYTCKACYERGKEVSVVPKTSASTDSPWMGLAKYAWSGYVIECPNCGVVYRSRQYWFGNQDPVDTVVRTEIVHVWPGTDAFLKDNNNAAQRLLDGMNFMAQSVSELSLGPTKAVTSWLTDQIAPAYWRPNSQILSCNQCATSFKDNDTKHHCRACGEGFCDSCSSKTRPVPERGWGPAPVRVCDSCYDARNVQLDVTEAQADDEGGTLIARKVGEAVQNTLGAVVTAIDIPLGLVKDAARPAYWVPDHEILHCHNCRKEFSVKLSKHHCRACGQGFCDECSHDCRAVPSRGWDHPVRVCFNCNKKPGDL</sequence>
<comment type="function">
    <text evidence="1 4 5">Plays a role in the formation of lipid droplets (LDs) which are storage organelles at the center of lipid and energy homeostasis (PubMed:30970241). Regulates the morphology, size and distribution of LDs (PubMed:30970241, PubMed:31293035). Mediates the formation of endoplasmic reticulum-lipid droplets (ER-LD) contact sites by forming a complex with RAB18 and ZW10 (By similarity). Binds to phosphatidylinositol 3-phosphate (PtdIns3P) through FYVE-type zinc finger (By similarity).</text>
</comment>
<comment type="subunit">
    <text evidence="1">Interacts with RAB18 (in GTP-bound form) (By similarity). Interacts with BSCL2 in a RAB18-dependent manner (By similarity). Interacts with ZW10 (By similarity).</text>
</comment>
<comment type="subcellular location">
    <subcellularLocation>
        <location evidence="3">Golgi apparatus</location>
    </subcellularLocation>
    <subcellularLocation>
        <location evidence="1">Golgi apparatus</location>
        <location evidence="1">Golgi stack</location>
    </subcellularLocation>
    <subcellularLocation>
        <location evidence="3">Endoplasmic reticulum</location>
    </subcellularLocation>
    <subcellularLocation>
        <location evidence="1">Preautophagosomal structure</location>
    </subcellularLocation>
    <subcellularLocation>
        <location evidence="5">Lipid droplet</location>
    </subcellularLocation>
    <subcellularLocation>
        <location evidence="3">Mitochondrion</location>
    </subcellularLocation>
    <text evidence="1">Resides predominantly in the cisternal stacks of the Golgi. Colocalizes with TRIM13 on the perinuclear endoplasmic reticulum. During starvation conditions, localizes to omegasomes which are endoplasmic reticulum connected strutures at the origin of preautophagosomal structures. Localizes to lipid droplets in the presence of oleic acid (By similarity).</text>
</comment>
<comment type="tissue specificity">
    <text evidence="3">Ubiquitous.</text>
</comment>
<keyword id="KW-0256">Endoplasmic reticulum</keyword>
<keyword id="KW-0333">Golgi apparatus</keyword>
<keyword id="KW-0551">Lipid droplet</keyword>
<keyword id="KW-0479">Metal-binding</keyword>
<keyword id="KW-0496">Mitochondrion</keyword>
<keyword id="KW-1185">Reference proteome</keyword>
<keyword id="KW-0677">Repeat</keyword>
<keyword id="KW-0862">Zinc</keyword>
<keyword id="KW-0863">Zinc-finger</keyword>
<accession>Q810J8</accession>
<accession>Q3TC20</accession>
<organism>
    <name type="scientific">Mus musculus</name>
    <name type="common">Mouse</name>
    <dbReference type="NCBI Taxonomy" id="10090"/>
    <lineage>
        <taxon>Eukaryota</taxon>
        <taxon>Metazoa</taxon>
        <taxon>Chordata</taxon>
        <taxon>Craniata</taxon>
        <taxon>Vertebrata</taxon>
        <taxon>Euteleostomi</taxon>
        <taxon>Mammalia</taxon>
        <taxon>Eutheria</taxon>
        <taxon>Euarchontoglires</taxon>
        <taxon>Glires</taxon>
        <taxon>Rodentia</taxon>
        <taxon>Myomorpha</taxon>
        <taxon>Muroidea</taxon>
        <taxon>Muridae</taxon>
        <taxon>Murinae</taxon>
        <taxon>Mus</taxon>
        <taxon>Mus</taxon>
    </lineage>
</organism>
<name>ZFYV1_MOUSE</name>
<protein>
    <recommendedName>
        <fullName>Zinc finger FYVE domain-containing protein 1</fullName>
    </recommendedName>
</protein>
<evidence type="ECO:0000250" key="1">
    <source>
        <dbReference type="UniProtKB" id="Q9HBF4"/>
    </source>
</evidence>
<evidence type="ECO:0000255" key="2">
    <source>
        <dbReference type="PROSITE-ProRule" id="PRU00091"/>
    </source>
</evidence>
<evidence type="ECO:0000269" key="3">
    <source>
    </source>
</evidence>
<evidence type="ECO:0000269" key="4">
    <source>
    </source>
</evidence>
<evidence type="ECO:0000269" key="5">
    <source>
    </source>
</evidence>
<evidence type="ECO:0000305" key="6"/>
<proteinExistence type="evidence at protein level"/>
<reference key="1">
    <citation type="journal article" date="2005" name="Science">
        <title>The transcriptional landscape of the mammalian genome.</title>
        <authorList>
            <person name="Carninci P."/>
            <person name="Kasukawa T."/>
            <person name="Katayama S."/>
            <person name="Gough J."/>
            <person name="Frith M.C."/>
            <person name="Maeda N."/>
            <person name="Oyama R."/>
            <person name="Ravasi T."/>
            <person name="Lenhard B."/>
            <person name="Wells C."/>
            <person name="Kodzius R."/>
            <person name="Shimokawa K."/>
            <person name="Bajic V.B."/>
            <person name="Brenner S.E."/>
            <person name="Batalov S."/>
            <person name="Forrest A.R."/>
            <person name="Zavolan M."/>
            <person name="Davis M.J."/>
            <person name="Wilming L.G."/>
            <person name="Aidinis V."/>
            <person name="Allen J.E."/>
            <person name="Ambesi-Impiombato A."/>
            <person name="Apweiler R."/>
            <person name="Aturaliya R.N."/>
            <person name="Bailey T.L."/>
            <person name="Bansal M."/>
            <person name="Baxter L."/>
            <person name="Beisel K.W."/>
            <person name="Bersano T."/>
            <person name="Bono H."/>
            <person name="Chalk A.M."/>
            <person name="Chiu K.P."/>
            <person name="Choudhary V."/>
            <person name="Christoffels A."/>
            <person name="Clutterbuck D.R."/>
            <person name="Crowe M.L."/>
            <person name="Dalla E."/>
            <person name="Dalrymple B.P."/>
            <person name="de Bono B."/>
            <person name="Della Gatta G."/>
            <person name="di Bernardo D."/>
            <person name="Down T."/>
            <person name="Engstrom P."/>
            <person name="Fagiolini M."/>
            <person name="Faulkner G."/>
            <person name="Fletcher C.F."/>
            <person name="Fukushima T."/>
            <person name="Furuno M."/>
            <person name="Futaki S."/>
            <person name="Gariboldi M."/>
            <person name="Georgii-Hemming P."/>
            <person name="Gingeras T.R."/>
            <person name="Gojobori T."/>
            <person name="Green R.E."/>
            <person name="Gustincich S."/>
            <person name="Harbers M."/>
            <person name="Hayashi Y."/>
            <person name="Hensch T.K."/>
            <person name="Hirokawa N."/>
            <person name="Hill D."/>
            <person name="Huminiecki L."/>
            <person name="Iacono M."/>
            <person name="Ikeo K."/>
            <person name="Iwama A."/>
            <person name="Ishikawa T."/>
            <person name="Jakt M."/>
            <person name="Kanapin A."/>
            <person name="Katoh M."/>
            <person name="Kawasawa Y."/>
            <person name="Kelso J."/>
            <person name="Kitamura H."/>
            <person name="Kitano H."/>
            <person name="Kollias G."/>
            <person name="Krishnan S.P."/>
            <person name="Kruger A."/>
            <person name="Kummerfeld S.K."/>
            <person name="Kurochkin I.V."/>
            <person name="Lareau L.F."/>
            <person name="Lazarevic D."/>
            <person name="Lipovich L."/>
            <person name="Liu J."/>
            <person name="Liuni S."/>
            <person name="McWilliam S."/>
            <person name="Madan Babu M."/>
            <person name="Madera M."/>
            <person name="Marchionni L."/>
            <person name="Matsuda H."/>
            <person name="Matsuzawa S."/>
            <person name="Miki H."/>
            <person name="Mignone F."/>
            <person name="Miyake S."/>
            <person name="Morris K."/>
            <person name="Mottagui-Tabar S."/>
            <person name="Mulder N."/>
            <person name="Nakano N."/>
            <person name="Nakauchi H."/>
            <person name="Ng P."/>
            <person name="Nilsson R."/>
            <person name="Nishiguchi S."/>
            <person name="Nishikawa S."/>
            <person name="Nori F."/>
            <person name="Ohara O."/>
            <person name="Okazaki Y."/>
            <person name="Orlando V."/>
            <person name="Pang K.C."/>
            <person name="Pavan W.J."/>
            <person name="Pavesi G."/>
            <person name="Pesole G."/>
            <person name="Petrovsky N."/>
            <person name="Piazza S."/>
            <person name="Reed J."/>
            <person name="Reid J.F."/>
            <person name="Ring B.Z."/>
            <person name="Ringwald M."/>
            <person name="Rost B."/>
            <person name="Ruan Y."/>
            <person name="Salzberg S.L."/>
            <person name="Sandelin A."/>
            <person name="Schneider C."/>
            <person name="Schoenbach C."/>
            <person name="Sekiguchi K."/>
            <person name="Semple C.A."/>
            <person name="Seno S."/>
            <person name="Sessa L."/>
            <person name="Sheng Y."/>
            <person name="Shibata Y."/>
            <person name="Shimada H."/>
            <person name="Shimada K."/>
            <person name="Silva D."/>
            <person name="Sinclair B."/>
            <person name="Sperling S."/>
            <person name="Stupka E."/>
            <person name="Sugiura K."/>
            <person name="Sultana R."/>
            <person name="Takenaka Y."/>
            <person name="Taki K."/>
            <person name="Tammoja K."/>
            <person name="Tan S.L."/>
            <person name="Tang S."/>
            <person name="Taylor M.S."/>
            <person name="Tegner J."/>
            <person name="Teichmann S.A."/>
            <person name="Ueda H.R."/>
            <person name="van Nimwegen E."/>
            <person name="Verardo R."/>
            <person name="Wei C.L."/>
            <person name="Yagi K."/>
            <person name="Yamanishi H."/>
            <person name="Zabarovsky E."/>
            <person name="Zhu S."/>
            <person name="Zimmer A."/>
            <person name="Hide W."/>
            <person name="Bult C."/>
            <person name="Grimmond S.M."/>
            <person name="Teasdale R.D."/>
            <person name="Liu E.T."/>
            <person name="Brusic V."/>
            <person name="Quackenbush J."/>
            <person name="Wahlestedt C."/>
            <person name="Mattick J.S."/>
            <person name="Hume D.A."/>
            <person name="Kai C."/>
            <person name="Sasaki D."/>
            <person name="Tomaru Y."/>
            <person name="Fukuda S."/>
            <person name="Kanamori-Katayama M."/>
            <person name="Suzuki M."/>
            <person name="Aoki J."/>
            <person name="Arakawa T."/>
            <person name="Iida J."/>
            <person name="Imamura K."/>
            <person name="Itoh M."/>
            <person name="Kato T."/>
            <person name="Kawaji H."/>
            <person name="Kawagashira N."/>
            <person name="Kawashima T."/>
            <person name="Kojima M."/>
            <person name="Kondo S."/>
            <person name="Konno H."/>
            <person name="Nakano K."/>
            <person name="Ninomiya N."/>
            <person name="Nishio T."/>
            <person name="Okada M."/>
            <person name="Plessy C."/>
            <person name="Shibata K."/>
            <person name="Shiraki T."/>
            <person name="Suzuki S."/>
            <person name="Tagami M."/>
            <person name="Waki K."/>
            <person name="Watahiki A."/>
            <person name="Okamura-Oho Y."/>
            <person name="Suzuki H."/>
            <person name="Kawai J."/>
            <person name="Hayashizaki Y."/>
        </authorList>
    </citation>
    <scope>NUCLEOTIDE SEQUENCE [LARGE SCALE MRNA]</scope>
    <source>
        <strain>NOD</strain>
    </source>
</reference>
<reference key="2">
    <citation type="journal article" date="2004" name="Genome Res.">
        <title>The status, quality, and expansion of the NIH full-length cDNA project: the Mammalian Gene Collection (MGC).</title>
        <authorList>
            <consortium name="The MGC Project Team"/>
        </authorList>
    </citation>
    <scope>NUCLEOTIDE SEQUENCE [LARGE SCALE MRNA]</scope>
    <source>
        <strain>C57BL/6J</strain>
        <tissue>Embryo</tissue>
    </source>
</reference>
<reference key="3">
    <citation type="journal article" date="2010" name="Cell">
        <title>A tissue-specific atlas of mouse protein phosphorylation and expression.</title>
        <authorList>
            <person name="Huttlin E.L."/>
            <person name="Jedrychowski M.P."/>
            <person name="Elias J.E."/>
            <person name="Goswami T."/>
            <person name="Rad R."/>
            <person name="Beausoleil S.A."/>
            <person name="Villen J."/>
            <person name="Haas W."/>
            <person name="Sowa M.E."/>
            <person name="Gygi S.P."/>
        </authorList>
    </citation>
    <scope>IDENTIFICATION BY MASS SPECTROMETRY [LARGE SCALE ANALYSIS]</scope>
    <source>
        <tissue>Brain</tissue>
        <tissue>Lung</tissue>
        <tissue>Spleen</tissue>
    </source>
</reference>
<reference key="4">
    <citation type="journal article" date="2015" name="Biomed. Res.">
        <title>Cellular localization and tissue distribution of endogenous DFCP1 protein.</title>
        <authorList>
            <person name="Nanao T."/>
            <person name="Koike M."/>
            <person name="Yamaguchi J."/>
            <person name="Sasaki M."/>
            <person name="Uchiyama Y."/>
        </authorList>
    </citation>
    <scope>SUBCELLULAR LOCATION</scope>
    <scope>TISSUE SPECIFICITY</scope>
</reference>
<reference key="5">
    <citation type="journal article" date="2019" name="Cell Biol. Int.">
        <title>DFCP1 associates with lipid droplets.</title>
        <authorList>
            <person name="Gao G."/>
            <person name="Sheng Y."/>
            <person name="Yang H."/>
            <person name="Chua B.T."/>
            <person name="Xu L."/>
        </authorList>
    </citation>
    <scope>FUNCTION</scope>
    <scope>SUBCELLULAR LOCATION</scope>
</reference>
<reference key="6">
    <citation type="journal article" date="2019" name="Cell Rep.">
        <title>The ER-Localized Protein DFCP1 Modulates ER-Lipid Droplet Contact Formation.</title>
        <authorList>
            <person name="Li D."/>
            <person name="Zhao Y.G."/>
            <person name="Li D."/>
            <person name="Zhao H."/>
            <person name="Huang J."/>
            <person name="Miao G."/>
            <person name="Feng D."/>
            <person name="Liu P."/>
            <person name="Li D."/>
            <person name="Zhang H."/>
        </authorList>
    </citation>
    <scope>FUNCTION</scope>
</reference>
<dbReference type="EMBL" id="AK170954">
    <property type="protein sequence ID" value="BAE42137.1"/>
    <property type="molecule type" value="mRNA"/>
</dbReference>
<dbReference type="EMBL" id="BC050015">
    <property type="protein sequence ID" value="AAH50015.1"/>
    <property type="molecule type" value="mRNA"/>
</dbReference>
<dbReference type="CCDS" id="CCDS26028.1"/>
<dbReference type="RefSeq" id="NP_001346095.1">
    <property type="nucleotide sequence ID" value="NM_001359166.1"/>
</dbReference>
<dbReference type="RefSeq" id="NP_001346096.1">
    <property type="nucleotide sequence ID" value="NM_001359167.1"/>
</dbReference>
<dbReference type="RefSeq" id="NP_001409913.1">
    <property type="nucleotide sequence ID" value="NM_001422984.1"/>
</dbReference>
<dbReference type="RefSeq" id="NP_898977.2">
    <property type="nucleotide sequence ID" value="NM_183154.4"/>
</dbReference>
<dbReference type="RefSeq" id="XP_006515752.1">
    <property type="nucleotide sequence ID" value="XM_006515689.3"/>
</dbReference>
<dbReference type="RefSeq" id="XP_006515753.1">
    <property type="nucleotide sequence ID" value="XM_006515690.5"/>
</dbReference>
<dbReference type="RefSeq" id="XP_006515754.1">
    <property type="nucleotide sequence ID" value="XM_006515691.2"/>
</dbReference>
<dbReference type="BioGRID" id="229946">
    <property type="interactions" value="5"/>
</dbReference>
<dbReference type="FunCoup" id="Q810J8">
    <property type="interactions" value="2491"/>
</dbReference>
<dbReference type="STRING" id="10090.ENSMUSP00000152501"/>
<dbReference type="GlyGen" id="Q810J8">
    <property type="glycosylation" value="3 sites, 1 O-linked glycan (3 sites)"/>
</dbReference>
<dbReference type="iPTMnet" id="Q810J8"/>
<dbReference type="PhosphoSitePlus" id="Q810J8"/>
<dbReference type="SwissPalm" id="Q810J8"/>
<dbReference type="PaxDb" id="10090-ENSMUSP00000042224"/>
<dbReference type="ProteomicsDB" id="275365"/>
<dbReference type="Pumba" id="Q810J8"/>
<dbReference type="Antibodypedia" id="143">
    <property type="antibodies" value="188 antibodies from 22 providers"/>
</dbReference>
<dbReference type="DNASU" id="217695"/>
<dbReference type="Ensembl" id="ENSMUST00000048319.6">
    <property type="protein sequence ID" value="ENSMUSP00000042224.5"/>
    <property type="gene ID" value="ENSMUSG00000042628.9"/>
</dbReference>
<dbReference type="Ensembl" id="ENSMUST00000221919.2">
    <property type="protein sequence ID" value="ENSMUSP00000152501.2"/>
    <property type="gene ID" value="ENSMUSG00000042628.9"/>
</dbReference>
<dbReference type="GeneID" id="217695"/>
<dbReference type="KEGG" id="mmu:217695"/>
<dbReference type="UCSC" id="uc007odg.1">
    <property type="organism name" value="mouse"/>
</dbReference>
<dbReference type="AGR" id="MGI:3026685"/>
<dbReference type="CTD" id="53349"/>
<dbReference type="MGI" id="MGI:3026685">
    <property type="gene designation" value="Zfyve1"/>
</dbReference>
<dbReference type="VEuPathDB" id="HostDB:ENSMUSG00000042628"/>
<dbReference type="eggNOG" id="KOG1818">
    <property type="taxonomic scope" value="Eukaryota"/>
</dbReference>
<dbReference type="GeneTree" id="ENSGT00390000016097"/>
<dbReference type="HOGENOM" id="CLU_020922_0_0_1"/>
<dbReference type="InParanoid" id="Q810J8"/>
<dbReference type="OMA" id="SYWIPDS"/>
<dbReference type="OrthoDB" id="68108at2759"/>
<dbReference type="PhylomeDB" id="Q810J8"/>
<dbReference type="TreeFam" id="TF323237"/>
<dbReference type="BioGRID-ORCS" id="217695">
    <property type="hits" value="2 hits in 76 CRISPR screens"/>
</dbReference>
<dbReference type="ChiTaRS" id="Zfyve1">
    <property type="organism name" value="mouse"/>
</dbReference>
<dbReference type="PRO" id="PR:Q810J8"/>
<dbReference type="Proteomes" id="UP000000589">
    <property type="component" value="Chromosome 12"/>
</dbReference>
<dbReference type="RNAct" id="Q810J8">
    <property type="molecule type" value="protein"/>
</dbReference>
<dbReference type="Bgee" id="ENSMUSG00000042628">
    <property type="expression patterns" value="Expressed in spermatid and 219 other cell types or tissues"/>
</dbReference>
<dbReference type="ExpressionAtlas" id="Q810J8">
    <property type="expression patterns" value="baseline and differential"/>
</dbReference>
<dbReference type="GO" id="GO:0005776">
    <property type="term" value="C:autophagosome"/>
    <property type="evidence" value="ECO:0000266"/>
    <property type="project" value="MGI"/>
</dbReference>
<dbReference type="GO" id="GO:0005783">
    <property type="term" value="C:endoplasmic reticulum"/>
    <property type="evidence" value="ECO:0000314"/>
    <property type="project" value="UniProtKB"/>
</dbReference>
<dbReference type="GO" id="GO:0005789">
    <property type="term" value="C:endoplasmic reticulum membrane"/>
    <property type="evidence" value="ECO:0000250"/>
    <property type="project" value="UniProtKB"/>
</dbReference>
<dbReference type="GO" id="GO:0097629">
    <property type="term" value="C:extrinsic component of omegasome membrane"/>
    <property type="evidence" value="ECO:0007669"/>
    <property type="project" value="Ensembl"/>
</dbReference>
<dbReference type="GO" id="GO:0005794">
    <property type="term" value="C:Golgi apparatus"/>
    <property type="evidence" value="ECO:0000314"/>
    <property type="project" value="UniProtKB"/>
</dbReference>
<dbReference type="GO" id="GO:0005795">
    <property type="term" value="C:Golgi stack"/>
    <property type="evidence" value="ECO:0000250"/>
    <property type="project" value="UniProtKB"/>
</dbReference>
<dbReference type="GO" id="GO:0005811">
    <property type="term" value="C:lipid droplet"/>
    <property type="evidence" value="ECO:0000314"/>
    <property type="project" value="UniProtKB"/>
</dbReference>
<dbReference type="GO" id="GO:0044233">
    <property type="term" value="C:mitochondria-associated endoplasmic reticulum membrane contact site"/>
    <property type="evidence" value="ECO:0000266"/>
    <property type="project" value="MGI"/>
</dbReference>
<dbReference type="GO" id="GO:0005739">
    <property type="term" value="C:mitochondrion"/>
    <property type="evidence" value="ECO:0000314"/>
    <property type="project" value="UniProtKB"/>
</dbReference>
<dbReference type="GO" id="GO:1990462">
    <property type="term" value="C:omegasome"/>
    <property type="evidence" value="ECO:0000250"/>
    <property type="project" value="UniProtKB"/>
</dbReference>
<dbReference type="GO" id="GO:0048471">
    <property type="term" value="C:perinuclear region of cytoplasm"/>
    <property type="evidence" value="ECO:0000250"/>
    <property type="project" value="UniProtKB"/>
</dbReference>
<dbReference type="GO" id="GO:0000407">
    <property type="term" value="C:phagophore assembly site"/>
    <property type="evidence" value="ECO:0000250"/>
    <property type="project" value="UniProtKB"/>
</dbReference>
<dbReference type="GO" id="GO:0005545">
    <property type="term" value="F:1-phosphatidylinositol binding"/>
    <property type="evidence" value="ECO:0000250"/>
    <property type="project" value="UniProtKB"/>
</dbReference>
<dbReference type="GO" id="GO:0005547">
    <property type="term" value="F:phosphatidylinositol-3,4,5-trisphosphate binding"/>
    <property type="evidence" value="ECO:0007669"/>
    <property type="project" value="Ensembl"/>
</dbReference>
<dbReference type="GO" id="GO:0043325">
    <property type="term" value="F:phosphatidylinositol-3,4-bisphosphate binding"/>
    <property type="evidence" value="ECO:0007669"/>
    <property type="project" value="Ensembl"/>
</dbReference>
<dbReference type="GO" id="GO:0032266">
    <property type="term" value="F:phosphatidylinositol-3-phosphate binding"/>
    <property type="evidence" value="ECO:0007669"/>
    <property type="project" value="Ensembl"/>
</dbReference>
<dbReference type="GO" id="GO:0008270">
    <property type="term" value="F:zinc ion binding"/>
    <property type="evidence" value="ECO:0007669"/>
    <property type="project" value="UniProtKB-KW"/>
</dbReference>
<dbReference type="GO" id="GO:0009267">
    <property type="term" value="P:cellular response to starvation"/>
    <property type="evidence" value="ECO:0007669"/>
    <property type="project" value="Ensembl"/>
</dbReference>
<dbReference type="GO" id="GO:0140042">
    <property type="term" value="P:lipid droplet formation"/>
    <property type="evidence" value="ECO:0000315"/>
    <property type="project" value="UniProtKB"/>
</dbReference>
<dbReference type="GO" id="GO:0016236">
    <property type="term" value="P:macroautophagy"/>
    <property type="evidence" value="ECO:0007669"/>
    <property type="project" value="Ensembl"/>
</dbReference>
<dbReference type="GO" id="GO:0044829">
    <property type="term" value="P:positive regulation by host of viral genome replication"/>
    <property type="evidence" value="ECO:0007669"/>
    <property type="project" value="Ensembl"/>
</dbReference>
<dbReference type="CDD" id="cd19819">
    <property type="entry name" value="Bbox1_ZFYVE1_rpt1"/>
    <property type="match status" value="1"/>
</dbReference>
<dbReference type="CDD" id="cd19820">
    <property type="entry name" value="Bbox1_ZFYVE1_rpt2"/>
    <property type="match status" value="1"/>
</dbReference>
<dbReference type="CDD" id="cd15734">
    <property type="entry name" value="FYVE_ZFYV1"/>
    <property type="match status" value="1"/>
</dbReference>
<dbReference type="CDD" id="cd01851">
    <property type="entry name" value="GBP"/>
    <property type="match status" value="1"/>
</dbReference>
<dbReference type="FunFam" id="3.30.40.10:FF:000109">
    <property type="entry name" value="Zinc finger FYVE domain-containing protein 1"/>
    <property type="match status" value="2"/>
</dbReference>
<dbReference type="FunFam" id="3.40.50.300:FF:000719">
    <property type="entry name" value="Zinc finger FYVE domain-containing protein 1"/>
    <property type="match status" value="1"/>
</dbReference>
<dbReference type="Gene3D" id="3.40.50.300">
    <property type="entry name" value="P-loop containing nucleotide triphosphate hydrolases"/>
    <property type="match status" value="1"/>
</dbReference>
<dbReference type="Gene3D" id="3.30.40.10">
    <property type="entry name" value="Zinc/RING finger domain, C3HC4 (zinc finger)"/>
    <property type="match status" value="2"/>
</dbReference>
<dbReference type="InterPro" id="IPR027417">
    <property type="entry name" value="P-loop_NTPase"/>
</dbReference>
<dbReference type="InterPro" id="IPR042427">
    <property type="entry name" value="ZFYV1"/>
</dbReference>
<dbReference type="InterPro" id="IPR047856">
    <property type="entry name" value="ZFYVE1_first_BBox1"/>
</dbReference>
<dbReference type="InterPro" id="IPR047855">
    <property type="entry name" value="ZFYVE1_second_BBox1"/>
</dbReference>
<dbReference type="InterPro" id="IPR000306">
    <property type="entry name" value="Znf_FYVE"/>
</dbReference>
<dbReference type="InterPro" id="IPR017455">
    <property type="entry name" value="Znf_FYVE-rel"/>
</dbReference>
<dbReference type="InterPro" id="IPR011011">
    <property type="entry name" value="Znf_FYVE_PHD"/>
</dbReference>
<dbReference type="InterPro" id="IPR013083">
    <property type="entry name" value="Znf_RING/FYVE/PHD"/>
</dbReference>
<dbReference type="PANTHER" id="PTHR46624">
    <property type="entry name" value="AGAP002036-PA"/>
    <property type="match status" value="1"/>
</dbReference>
<dbReference type="PANTHER" id="PTHR46624:SF3">
    <property type="entry name" value="ZINC FINGER FYVE DOMAIN-CONTAINING PROTEIN 1"/>
    <property type="match status" value="1"/>
</dbReference>
<dbReference type="Pfam" id="PF22586">
    <property type="entry name" value="ANCHR-like_BBOX"/>
    <property type="match status" value="1"/>
</dbReference>
<dbReference type="Pfam" id="PF01363">
    <property type="entry name" value="FYVE"/>
    <property type="match status" value="2"/>
</dbReference>
<dbReference type="SMART" id="SM00064">
    <property type="entry name" value="FYVE"/>
    <property type="match status" value="2"/>
</dbReference>
<dbReference type="SUPFAM" id="SSF57903">
    <property type="entry name" value="FYVE/PHD zinc finger"/>
    <property type="match status" value="2"/>
</dbReference>
<dbReference type="SUPFAM" id="SSF52540">
    <property type="entry name" value="P-loop containing nucleoside triphosphate hydrolases"/>
    <property type="match status" value="1"/>
</dbReference>
<dbReference type="PROSITE" id="PS50178">
    <property type="entry name" value="ZF_FYVE"/>
    <property type="match status" value="2"/>
</dbReference>
<gene>
    <name type="primary">Zfyve1</name>
</gene>
<feature type="chain" id="PRO_0000098714" description="Zinc finger FYVE domain-containing protein 1">
    <location>
        <begin position="1"/>
        <end position="777"/>
    </location>
</feature>
<feature type="zinc finger region" description="FYVE-type 1" evidence="2">
    <location>
        <begin position="598"/>
        <end position="659"/>
    </location>
</feature>
<feature type="zinc finger region" description="FYVE-type 2" evidence="2">
    <location>
        <begin position="715"/>
        <end position="775"/>
    </location>
</feature>
<feature type="region of interest" description="Required for localization in the lipid droplets" evidence="1">
    <location>
        <begin position="416"/>
        <end position="777"/>
    </location>
</feature>
<feature type="binding site" evidence="2">
    <location>
        <position position="604"/>
    </location>
    <ligand>
        <name>Zn(2+)</name>
        <dbReference type="ChEBI" id="CHEBI:29105"/>
        <label>1</label>
    </ligand>
</feature>
<feature type="binding site" evidence="2">
    <location>
        <position position="607"/>
    </location>
    <ligand>
        <name>Zn(2+)</name>
        <dbReference type="ChEBI" id="CHEBI:29105"/>
        <label>1</label>
    </ligand>
</feature>
<feature type="binding site" evidence="2">
    <location>
        <position position="620"/>
    </location>
    <ligand>
        <name>Zn(2+)</name>
        <dbReference type="ChEBI" id="CHEBI:29105"/>
        <label>2</label>
    </ligand>
</feature>
<feature type="binding site" evidence="2">
    <location>
        <position position="623"/>
    </location>
    <ligand>
        <name>Zn(2+)</name>
        <dbReference type="ChEBI" id="CHEBI:29105"/>
        <label>2</label>
    </ligand>
</feature>
<feature type="binding site" evidence="2">
    <location>
        <position position="628"/>
    </location>
    <ligand>
        <name>Zn(2+)</name>
        <dbReference type="ChEBI" id="CHEBI:29105"/>
        <label>1</label>
    </ligand>
</feature>
<feature type="binding site" evidence="2">
    <location>
        <position position="631"/>
    </location>
    <ligand>
        <name>Zn(2+)</name>
        <dbReference type="ChEBI" id="CHEBI:29105"/>
        <label>1</label>
    </ligand>
</feature>
<feature type="binding site" evidence="2">
    <location>
        <position position="651"/>
    </location>
    <ligand>
        <name>Zn(2+)</name>
        <dbReference type="ChEBI" id="CHEBI:29105"/>
        <label>2</label>
    </ligand>
</feature>
<feature type="binding site" evidence="2">
    <location>
        <position position="654"/>
    </location>
    <ligand>
        <name>Zn(2+)</name>
        <dbReference type="ChEBI" id="CHEBI:29105"/>
        <label>2</label>
    </ligand>
</feature>
<feature type="binding site" evidence="2">
    <location>
        <position position="721"/>
    </location>
    <ligand>
        <name>Zn(2+)</name>
        <dbReference type="ChEBI" id="CHEBI:29105"/>
        <label>3</label>
    </ligand>
</feature>
<feature type="binding site" evidence="2">
    <location>
        <position position="724"/>
    </location>
    <ligand>
        <name>Zn(2+)</name>
        <dbReference type="ChEBI" id="CHEBI:29105"/>
        <label>3</label>
    </ligand>
</feature>
<feature type="binding site" evidence="2">
    <location>
        <position position="737"/>
    </location>
    <ligand>
        <name>Zn(2+)</name>
        <dbReference type="ChEBI" id="CHEBI:29105"/>
        <label>4</label>
    </ligand>
</feature>
<feature type="binding site" evidence="2">
    <location>
        <position position="740"/>
    </location>
    <ligand>
        <name>Zn(2+)</name>
        <dbReference type="ChEBI" id="CHEBI:29105"/>
        <label>4</label>
    </ligand>
</feature>
<feature type="binding site" evidence="2">
    <location>
        <position position="745"/>
    </location>
    <ligand>
        <name>Zn(2+)</name>
        <dbReference type="ChEBI" id="CHEBI:29105"/>
        <label>3</label>
    </ligand>
</feature>
<feature type="binding site" evidence="2">
    <location>
        <position position="748"/>
    </location>
    <ligand>
        <name>Zn(2+)</name>
        <dbReference type="ChEBI" id="CHEBI:29105"/>
        <label>3</label>
    </ligand>
</feature>
<feature type="binding site" evidence="2">
    <location>
        <position position="767"/>
    </location>
    <ligand>
        <name>Zn(2+)</name>
        <dbReference type="ChEBI" id="CHEBI:29105"/>
        <label>4</label>
    </ligand>
</feature>
<feature type="binding site" evidence="2">
    <location>
        <position position="770"/>
    </location>
    <ligand>
        <name>Zn(2+)</name>
        <dbReference type="ChEBI" id="CHEBI:29105"/>
        <label>4</label>
    </ligand>
</feature>
<feature type="sequence conflict" description="In Ref. 1; BAE42137." evidence="6" ref="1">
    <original>I</original>
    <variation>V</variation>
    <location>
        <position position="185"/>
    </location>
</feature>
<feature type="sequence conflict" description="In Ref. 1; BAE42137." evidence="6" ref="1">
    <original>G</original>
    <variation>S</variation>
    <location>
        <position position="204"/>
    </location>
</feature>